<sequence length="330" mass="37002">MAAVDSFYLLYREIARSCNCYMEALALVGAWYTARKSITVICDFYSLIRLHFIPRLGSRADLIKQYGRWAVVSGATDGIGKAYAEELASRGLNIILISRNEEKLQVVAKDIADTYKVETDIIVADFSSGREIYLPIREALKDKDVGILVNNVGVFYPYPQYFTQLSEDKLWDIINVNIAAASLMVHVVLPGMVERKKGAIVTISSGSCCKPTPQLAAFSASKAYLDHFSRALQYEYASKGIFVQSLIPFYVATSMTAPSNFLHRCSWLVPSPKVYAHHAVSTLGISKRTTGYWSHSIQFLFAQYMPEWLWVWGANILNRSLRKEALSCTA</sequence>
<protein>
    <recommendedName>
        <fullName>Inactive hydroxysteroid dehydrogenase-like protein 1</fullName>
    </recommendedName>
    <alternativeName>
        <fullName>Short chain dehydrogenase/reductase family 12C member 3</fullName>
    </alternativeName>
</protein>
<proteinExistence type="evidence at protein level"/>
<keyword id="KW-0007">Acetylation</keyword>
<keyword id="KW-0025">Alternative splicing</keyword>
<keyword id="KW-0903">Direct protein sequencing</keyword>
<keyword id="KW-0496">Mitochondrion</keyword>
<keyword id="KW-0521">NADP</keyword>
<keyword id="KW-1267">Proteomics identification</keyword>
<keyword id="KW-1185">Reference proteome</keyword>
<reference key="1">
    <citation type="journal article" date="2001" name="Mol. Biol. Rep.">
        <title>A novel human hydroxysteroid dehydrogenase like 1 gene (HSDL1) is highly expressed in reproductive tissues.</title>
        <authorList>
            <person name="Huang Y."/>
            <person name="Tang R."/>
            <person name="Dai J."/>
            <person name="Gu S."/>
            <person name="Zhao W."/>
            <person name="Cheng C."/>
            <person name="Xu M."/>
            <person name="Zhou Z."/>
            <person name="Ying K."/>
            <person name="Xi Y."/>
            <person name="Mao Y."/>
        </authorList>
    </citation>
    <scope>NUCLEOTIDE SEQUENCE [MRNA] (ISOFORM 1)</scope>
    <scope>TISSUE SPECIFICITY</scope>
    <source>
        <tissue>Fetal brain</tissue>
    </source>
</reference>
<reference key="2">
    <citation type="journal article" date="2004" name="Nat. Genet.">
        <title>Complete sequencing and characterization of 21,243 full-length human cDNAs.</title>
        <authorList>
            <person name="Ota T."/>
            <person name="Suzuki Y."/>
            <person name="Nishikawa T."/>
            <person name="Otsuki T."/>
            <person name="Sugiyama T."/>
            <person name="Irie R."/>
            <person name="Wakamatsu A."/>
            <person name="Hayashi K."/>
            <person name="Sato H."/>
            <person name="Nagai K."/>
            <person name="Kimura K."/>
            <person name="Makita H."/>
            <person name="Sekine M."/>
            <person name="Obayashi M."/>
            <person name="Nishi T."/>
            <person name="Shibahara T."/>
            <person name="Tanaka T."/>
            <person name="Ishii S."/>
            <person name="Yamamoto J."/>
            <person name="Saito K."/>
            <person name="Kawai Y."/>
            <person name="Isono Y."/>
            <person name="Nakamura Y."/>
            <person name="Nagahari K."/>
            <person name="Murakami K."/>
            <person name="Yasuda T."/>
            <person name="Iwayanagi T."/>
            <person name="Wagatsuma M."/>
            <person name="Shiratori A."/>
            <person name="Sudo H."/>
            <person name="Hosoiri T."/>
            <person name="Kaku Y."/>
            <person name="Kodaira H."/>
            <person name="Kondo H."/>
            <person name="Sugawara M."/>
            <person name="Takahashi M."/>
            <person name="Kanda K."/>
            <person name="Yokoi T."/>
            <person name="Furuya T."/>
            <person name="Kikkawa E."/>
            <person name="Omura Y."/>
            <person name="Abe K."/>
            <person name="Kamihara K."/>
            <person name="Katsuta N."/>
            <person name="Sato K."/>
            <person name="Tanikawa M."/>
            <person name="Yamazaki M."/>
            <person name="Ninomiya K."/>
            <person name="Ishibashi T."/>
            <person name="Yamashita H."/>
            <person name="Murakawa K."/>
            <person name="Fujimori K."/>
            <person name="Tanai H."/>
            <person name="Kimata M."/>
            <person name="Watanabe M."/>
            <person name="Hiraoka S."/>
            <person name="Chiba Y."/>
            <person name="Ishida S."/>
            <person name="Ono Y."/>
            <person name="Takiguchi S."/>
            <person name="Watanabe S."/>
            <person name="Yosida M."/>
            <person name="Hotuta T."/>
            <person name="Kusano J."/>
            <person name="Kanehori K."/>
            <person name="Takahashi-Fujii A."/>
            <person name="Hara H."/>
            <person name="Tanase T.-O."/>
            <person name="Nomura Y."/>
            <person name="Togiya S."/>
            <person name="Komai F."/>
            <person name="Hara R."/>
            <person name="Takeuchi K."/>
            <person name="Arita M."/>
            <person name="Imose N."/>
            <person name="Musashino K."/>
            <person name="Yuuki H."/>
            <person name="Oshima A."/>
            <person name="Sasaki N."/>
            <person name="Aotsuka S."/>
            <person name="Yoshikawa Y."/>
            <person name="Matsunawa H."/>
            <person name="Ichihara T."/>
            <person name="Shiohata N."/>
            <person name="Sano S."/>
            <person name="Moriya S."/>
            <person name="Momiyama H."/>
            <person name="Satoh N."/>
            <person name="Takami S."/>
            <person name="Terashima Y."/>
            <person name="Suzuki O."/>
            <person name="Nakagawa S."/>
            <person name="Senoh A."/>
            <person name="Mizoguchi H."/>
            <person name="Goto Y."/>
            <person name="Shimizu F."/>
            <person name="Wakebe H."/>
            <person name="Hishigaki H."/>
            <person name="Watanabe T."/>
            <person name="Sugiyama A."/>
            <person name="Takemoto M."/>
            <person name="Kawakami B."/>
            <person name="Yamazaki M."/>
            <person name="Watanabe K."/>
            <person name="Kumagai A."/>
            <person name="Itakura S."/>
            <person name="Fukuzumi Y."/>
            <person name="Fujimori Y."/>
            <person name="Komiyama M."/>
            <person name="Tashiro H."/>
            <person name="Tanigami A."/>
            <person name="Fujiwara T."/>
            <person name="Ono T."/>
            <person name="Yamada K."/>
            <person name="Fujii Y."/>
            <person name="Ozaki K."/>
            <person name="Hirao M."/>
            <person name="Ohmori Y."/>
            <person name="Kawabata A."/>
            <person name="Hikiji T."/>
            <person name="Kobatake N."/>
            <person name="Inagaki H."/>
            <person name="Ikema Y."/>
            <person name="Okamoto S."/>
            <person name="Okitani R."/>
            <person name="Kawakami T."/>
            <person name="Noguchi S."/>
            <person name="Itoh T."/>
            <person name="Shigeta K."/>
            <person name="Senba T."/>
            <person name="Matsumura K."/>
            <person name="Nakajima Y."/>
            <person name="Mizuno T."/>
            <person name="Morinaga M."/>
            <person name="Sasaki M."/>
            <person name="Togashi T."/>
            <person name="Oyama M."/>
            <person name="Hata H."/>
            <person name="Watanabe M."/>
            <person name="Komatsu T."/>
            <person name="Mizushima-Sugano J."/>
            <person name="Satoh T."/>
            <person name="Shirai Y."/>
            <person name="Takahashi Y."/>
            <person name="Nakagawa K."/>
            <person name="Okumura K."/>
            <person name="Nagase T."/>
            <person name="Nomura N."/>
            <person name="Kikuchi H."/>
            <person name="Masuho Y."/>
            <person name="Yamashita R."/>
            <person name="Nakai K."/>
            <person name="Yada T."/>
            <person name="Nakamura Y."/>
            <person name="Ohara O."/>
            <person name="Isogai T."/>
            <person name="Sugano S."/>
        </authorList>
    </citation>
    <scope>NUCLEOTIDE SEQUENCE [LARGE SCALE MRNA] (ISOFORMS 1 AND 2)</scope>
    <scope>VARIANT CYS-327</scope>
    <source>
        <tissue>Brain</tissue>
    </source>
</reference>
<reference key="3">
    <citation type="journal article" date="2004" name="Nature">
        <title>The sequence and analysis of duplication-rich human chromosome 16.</title>
        <authorList>
            <person name="Martin J."/>
            <person name="Han C."/>
            <person name="Gordon L.A."/>
            <person name="Terry A."/>
            <person name="Prabhakar S."/>
            <person name="She X."/>
            <person name="Xie G."/>
            <person name="Hellsten U."/>
            <person name="Chan Y.M."/>
            <person name="Altherr M."/>
            <person name="Couronne O."/>
            <person name="Aerts A."/>
            <person name="Bajorek E."/>
            <person name="Black S."/>
            <person name="Blumer H."/>
            <person name="Branscomb E."/>
            <person name="Brown N.C."/>
            <person name="Bruno W.J."/>
            <person name="Buckingham J.M."/>
            <person name="Callen D.F."/>
            <person name="Campbell C.S."/>
            <person name="Campbell M.L."/>
            <person name="Campbell E.W."/>
            <person name="Caoile C."/>
            <person name="Challacombe J.F."/>
            <person name="Chasteen L.A."/>
            <person name="Chertkov O."/>
            <person name="Chi H.C."/>
            <person name="Christensen M."/>
            <person name="Clark L.M."/>
            <person name="Cohn J.D."/>
            <person name="Denys M."/>
            <person name="Detter J.C."/>
            <person name="Dickson M."/>
            <person name="Dimitrijevic-Bussod M."/>
            <person name="Escobar J."/>
            <person name="Fawcett J.J."/>
            <person name="Flowers D."/>
            <person name="Fotopulos D."/>
            <person name="Glavina T."/>
            <person name="Gomez M."/>
            <person name="Gonzales E."/>
            <person name="Goodstein D."/>
            <person name="Goodwin L.A."/>
            <person name="Grady D.L."/>
            <person name="Grigoriev I."/>
            <person name="Groza M."/>
            <person name="Hammon N."/>
            <person name="Hawkins T."/>
            <person name="Haydu L."/>
            <person name="Hildebrand C.E."/>
            <person name="Huang W."/>
            <person name="Israni S."/>
            <person name="Jett J."/>
            <person name="Jewett P.B."/>
            <person name="Kadner K."/>
            <person name="Kimball H."/>
            <person name="Kobayashi A."/>
            <person name="Krawczyk M.-C."/>
            <person name="Leyba T."/>
            <person name="Longmire J.L."/>
            <person name="Lopez F."/>
            <person name="Lou Y."/>
            <person name="Lowry S."/>
            <person name="Ludeman T."/>
            <person name="Manohar C.F."/>
            <person name="Mark G.A."/>
            <person name="McMurray K.L."/>
            <person name="Meincke L.J."/>
            <person name="Morgan J."/>
            <person name="Moyzis R.K."/>
            <person name="Mundt M.O."/>
            <person name="Munk A.C."/>
            <person name="Nandkeshwar R.D."/>
            <person name="Pitluck S."/>
            <person name="Pollard M."/>
            <person name="Predki P."/>
            <person name="Parson-Quintana B."/>
            <person name="Ramirez L."/>
            <person name="Rash S."/>
            <person name="Retterer J."/>
            <person name="Ricke D.O."/>
            <person name="Robinson D.L."/>
            <person name="Rodriguez A."/>
            <person name="Salamov A."/>
            <person name="Saunders E.H."/>
            <person name="Scott D."/>
            <person name="Shough T."/>
            <person name="Stallings R.L."/>
            <person name="Stalvey M."/>
            <person name="Sutherland R.D."/>
            <person name="Tapia R."/>
            <person name="Tesmer J.G."/>
            <person name="Thayer N."/>
            <person name="Thompson L.S."/>
            <person name="Tice H."/>
            <person name="Torney D.C."/>
            <person name="Tran-Gyamfi M."/>
            <person name="Tsai M."/>
            <person name="Ulanovsky L.E."/>
            <person name="Ustaszewska A."/>
            <person name="Vo N."/>
            <person name="White P.S."/>
            <person name="Williams A.L."/>
            <person name="Wills P.L."/>
            <person name="Wu J.-R."/>
            <person name="Wu K."/>
            <person name="Yang J."/>
            <person name="DeJong P."/>
            <person name="Bruce D."/>
            <person name="Doggett N.A."/>
            <person name="Deaven L."/>
            <person name="Schmutz J."/>
            <person name="Grimwood J."/>
            <person name="Richardson P."/>
            <person name="Rokhsar D.S."/>
            <person name="Eichler E.E."/>
            <person name="Gilna P."/>
            <person name="Lucas S.M."/>
            <person name="Myers R.M."/>
            <person name="Rubin E.M."/>
            <person name="Pennacchio L.A."/>
        </authorList>
    </citation>
    <scope>NUCLEOTIDE SEQUENCE [LARGE SCALE GENOMIC DNA]</scope>
</reference>
<reference key="4">
    <citation type="submission" date="2005-09" db="EMBL/GenBank/DDBJ databases">
        <authorList>
            <person name="Mural R.J."/>
            <person name="Istrail S."/>
            <person name="Sutton G.G."/>
            <person name="Florea L."/>
            <person name="Halpern A.L."/>
            <person name="Mobarry C.M."/>
            <person name="Lippert R."/>
            <person name="Walenz B."/>
            <person name="Shatkay H."/>
            <person name="Dew I."/>
            <person name="Miller J.R."/>
            <person name="Flanigan M.J."/>
            <person name="Edwards N.J."/>
            <person name="Bolanos R."/>
            <person name="Fasulo D."/>
            <person name="Halldorsson B.V."/>
            <person name="Hannenhalli S."/>
            <person name="Turner R."/>
            <person name="Yooseph S."/>
            <person name="Lu F."/>
            <person name="Nusskern D.R."/>
            <person name="Shue B.C."/>
            <person name="Zheng X.H."/>
            <person name="Zhong F."/>
            <person name="Delcher A.L."/>
            <person name="Huson D.H."/>
            <person name="Kravitz S.A."/>
            <person name="Mouchard L."/>
            <person name="Reinert K."/>
            <person name="Remington K.A."/>
            <person name="Clark A.G."/>
            <person name="Waterman M.S."/>
            <person name="Eichler E.E."/>
            <person name="Adams M.D."/>
            <person name="Hunkapiller M.W."/>
            <person name="Myers E.W."/>
            <person name="Venter J.C."/>
        </authorList>
    </citation>
    <scope>NUCLEOTIDE SEQUENCE [LARGE SCALE GENOMIC DNA]</scope>
</reference>
<reference key="5">
    <citation type="journal article" date="2004" name="Genome Res.">
        <title>The status, quality, and expansion of the NIH full-length cDNA project: the Mammalian Gene Collection (MGC).</title>
        <authorList>
            <consortium name="The MGC Project Team"/>
        </authorList>
    </citation>
    <scope>NUCLEOTIDE SEQUENCE [LARGE SCALE MRNA] (ISOFORM 1)</scope>
</reference>
<reference key="6">
    <citation type="submission" date="2008-07" db="UniProtKB">
        <authorList>
            <person name="Bienvenut W.V."/>
            <person name="Preisinger C."/>
            <person name="Kolch W."/>
        </authorList>
    </citation>
    <scope>PROTEIN SEQUENCE OF 2-12 AND 91-99</scope>
    <scope>CLEAVAGE OF INITIATOR METHIONINE</scope>
    <scope>ACETYLATION AT ALA-2</scope>
    <scope>IDENTIFICATION BY MASS SPECTROMETRY</scope>
    <source>
        <tissue>Chronic myeloid leukemia cell</tissue>
    </source>
</reference>
<reference key="7">
    <citation type="journal article" date="2009" name="Chem. Biol. Interact.">
        <title>Human and zebrafish hydroxysteroid dehydrogenase like 1 (HSDL1) proteins are inactive enzymes but conserved among species.</title>
        <authorList>
            <person name="Meier M."/>
            <person name="Tokarz J."/>
            <person name="Haller F."/>
            <person name="Mindnich R."/>
            <person name="Adamski J."/>
        </authorList>
    </citation>
    <scope>LACK OF ENZYME ACTIVITY</scope>
    <scope>SUBCELLULAR LOCATION</scope>
    <scope>TISSUE SPECIFICITY</scope>
    <scope>MUTAGENESIS OF PHE-218</scope>
    <scope>INTERACTION WITH STYXL1</scope>
</reference>
<reference key="8">
    <citation type="journal article" date="2015" name="Proteomics">
        <title>N-terminome analysis of the human mitochondrial proteome.</title>
        <authorList>
            <person name="Vaca Jacome A.S."/>
            <person name="Rabilloud T."/>
            <person name="Schaeffer-Reiss C."/>
            <person name="Rompais M."/>
            <person name="Ayoub D."/>
            <person name="Lane L."/>
            <person name="Bairoch A."/>
            <person name="Van Dorsselaer A."/>
            <person name="Carapito C."/>
        </authorList>
    </citation>
    <scope>IDENTIFICATION BY MASS SPECTROMETRY [LARGE SCALE ANALYSIS]</scope>
</reference>
<gene>
    <name type="primary">HSDL1</name>
    <name type="synonym">SDR12C3</name>
</gene>
<evidence type="ECO:0000250" key="1"/>
<evidence type="ECO:0000269" key="2">
    <source>
    </source>
</evidence>
<evidence type="ECO:0000269" key="3">
    <source>
    </source>
</evidence>
<evidence type="ECO:0000269" key="4">
    <source>
    </source>
</evidence>
<evidence type="ECO:0000269" key="5">
    <source ref="6"/>
</evidence>
<evidence type="ECO:0000303" key="6">
    <source>
    </source>
</evidence>
<evidence type="ECO:0000305" key="7"/>
<comment type="subunit">
    <text evidence="4">Interacts with STYXL1.</text>
</comment>
<comment type="subcellular location">
    <subcellularLocation>
        <location evidence="4">Mitochondrion</location>
    </subcellularLocation>
</comment>
<comment type="alternative products">
    <event type="alternative splicing"/>
    <isoform>
        <id>Q3SXM5-1</id>
        <name>1</name>
        <sequence type="displayed"/>
    </isoform>
    <isoform>
        <id>Q3SXM5-2</id>
        <name>2</name>
        <sequence type="described" ref="VSP_042823"/>
    </isoform>
</comment>
<comment type="tissue specificity">
    <text evidence="2 4">Highly expressed in testis and ovary. Also detected in thyroid, spinal cord, adrenal gland, heart, placenta, skeletal muscle, small intestine, colon, spleen, prostate and pancreas.</text>
</comment>
<comment type="similarity">
    <text evidence="7">Belongs to the short-chain dehydrogenases/reductases (SDR) family. 17-beta-HSD 3 subfamily.</text>
</comment>
<comment type="caution">
    <text evidence="7">Although it belongs to the SDR family, Phe-218 is present instead of the conserved Tyr which is an active site residue. It is therefore expected that this protein lacks oxidoreductase activity.</text>
</comment>
<comment type="sequence caution" evidence="7">
    <conflict type="erroneous initiation">
        <sequence resource="EMBL-CDS" id="AAK15047"/>
    </conflict>
    <text>Truncated N-terminus.</text>
</comment>
<comment type="sequence caution" evidence="7">
    <conflict type="erroneous initiation">
        <sequence resource="EMBL-CDS" id="AAK16927"/>
    </conflict>
    <text>Truncated N-terminus.</text>
</comment>
<dbReference type="EMBL" id="AF237684">
    <property type="protein sequence ID" value="AAK15047.1"/>
    <property type="status" value="ALT_INIT"/>
    <property type="molecule type" value="mRNA"/>
</dbReference>
<dbReference type="EMBL" id="AY028377">
    <property type="protein sequence ID" value="AAK16927.1"/>
    <property type="status" value="ALT_INIT"/>
    <property type="molecule type" value="mRNA"/>
</dbReference>
<dbReference type="EMBL" id="AK074878">
    <property type="protein sequence ID" value="BAC11262.1"/>
    <property type="molecule type" value="mRNA"/>
</dbReference>
<dbReference type="EMBL" id="AK299798">
    <property type="protein sequence ID" value="BAG61674.1"/>
    <property type="molecule type" value="mRNA"/>
</dbReference>
<dbReference type="EMBL" id="AC040169">
    <property type="status" value="NOT_ANNOTATED_CDS"/>
    <property type="molecule type" value="Genomic_DNA"/>
</dbReference>
<dbReference type="EMBL" id="CH471114">
    <property type="protein sequence ID" value="EAW95502.1"/>
    <property type="molecule type" value="Genomic_DNA"/>
</dbReference>
<dbReference type="EMBL" id="CH471114">
    <property type="protein sequence ID" value="EAW95503.1"/>
    <property type="molecule type" value="Genomic_DNA"/>
</dbReference>
<dbReference type="EMBL" id="CH471114">
    <property type="protein sequence ID" value="EAW95504.1"/>
    <property type="molecule type" value="Genomic_DNA"/>
</dbReference>
<dbReference type="EMBL" id="BC104219">
    <property type="protein sequence ID" value="AAI04220.1"/>
    <property type="molecule type" value="mRNA"/>
</dbReference>
<dbReference type="EMBL" id="BC106917">
    <property type="protein sequence ID" value="AAI06918.1"/>
    <property type="molecule type" value="mRNA"/>
</dbReference>
<dbReference type="EMBL" id="BC104218">
    <property type="protein sequence ID" value="AAI04219.1"/>
    <property type="molecule type" value="mRNA"/>
</dbReference>
<dbReference type="CCDS" id="CCDS10942.1">
    <molecule id="Q3SXM5-1"/>
</dbReference>
<dbReference type="CCDS" id="CCDS54046.1">
    <molecule id="Q3SXM5-2"/>
</dbReference>
<dbReference type="RefSeq" id="NP_001139523.1">
    <molecule id="Q3SXM5-2"/>
    <property type="nucleotide sequence ID" value="NM_001146051.2"/>
</dbReference>
<dbReference type="RefSeq" id="NP_113651.4">
    <molecule id="Q3SXM5-1"/>
    <property type="nucleotide sequence ID" value="NM_031463.4"/>
</dbReference>
<dbReference type="RefSeq" id="XP_005256246.1">
    <molecule id="Q3SXM5-1"/>
    <property type="nucleotide sequence ID" value="XM_005256189.4"/>
</dbReference>
<dbReference type="RefSeq" id="XP_054170067.1">
    <molecule id="Q3SXM5-1"/>
    <property type="nucleotide sequence ID" value="XM_054314092.1"/>
</dbReference>
<dbReference type="SMR" id="Q3SXM5"/>
<dbReference type="BioGRID" id="123727">
    <property type="interactions" value="81"/>
</dbReference>
<dbReference type="FunCoup" id="Q3SXM5">
    <property type="interactions" value="1929"/>
</dbReference>
<dbReference type="IntAct" id="Q3SXM5">
    <property type="interactions" value="54"/>
</dbReference>
<dbReference type="MINT" id="Q3SXM5"/>
<dbReference type="STRING" id="9606.ENSP00000219439"/>
<dbReference type="iPTMnet" id="Q3SXM5"/>
<dbReference type="PhosphoSitePlus" id="Q3SXM5"/>
<dbReference type="SwissPalm" id="Q3SXM5"/>
<dbReference type="BioMuta" id="HSDL1"/>
<dbReference type="DMDM" id="313104226"/>
<dbReference type="jPOST" id="Q3SXM5"/>
<dbReference type="MassIVE" id="Q3SXM5"/>
<dbReference type="PaxDb" id="9606-ENSP00000219439"/>
<dbReference type="PeptideAtlas" id="Q3SXM5"/>
<dbReference type="ProteomicsDB" id="61817">
    <molecule id="Q3SXM5-1"/>
</dbReference>
<dbReference type="ProteomicsDB" id="61818">
    <molecule id="Q3SXM5-2"/>
</dbReference>
<dbReference type="Pumba" id="Q3SXM5"/>
<dbReference type="Antibodypedia" id="30543">
    <property type="antibodies" value="61 antibodies from 20 providers"/>
</dbReference>
<dbReference type="DNASU" id="83693"/>
<dbReference type="Ensembl" id="ENST00000219439.9">
    <molecule id="Q3SXM5-1"/>
    <property type="protein sequence ID" value="ENSP00000219439.4"/>
    <property type="gene ID" value="ENSG00000103160.12"/>
</dbReference>
<dbReference type="Ensembl" id="ENST00000434463.7">
    <molecule id="Q3SXM5-2"/>
    <property type="protein sequence ID" value="ENSP00000407437.3"/>
    <property type="gene ID" value="ENSG00000103160.12"/>
</dbReference>
<dbReference type="GeneID" id="83693"/>
<dbReference type="KEGG" id="hsa:83693"/>
<dbReference type="MANE-Select" id="ENST00000219439.9">
    <property type="protein sequence ID" value="ENSP00000219439.4"/>
    <property type="RefSeq nucleotide sequence ID" value="NM_031463.5"/>
    <property type="RefSeq protein sequence ID" value="NP_113651.4"/>
</dbReference>
<dbReference type="UCSC" id="uc002fhk.3">
    <molecule id="Q3SXM5-1"/>
    <property type="organism name" value="human"/>
</dbReference>
<dbReference type="AGR" id="HGNC:16475"/>
<dbReference type="CTD" id="83693"/>
<dbReference type="DisGeNET" id="83693"/>
<dbReference type="GeneCards" id="HSDL1"/>
<dbReference type="HGNC" id="HGNC:16475">
    <property type="gene designation" value="HSDL1"/>
</dbReference>
<dbReference type="HPA" id="ENSG00000103160">
    <property type="expression patterns" value="Low tissue specificity"/>
</dbReference>
<dbReference type="MalaCards" id="HSDL1"/>
<dbReference type="MIM" id="619067">
    <property type="type" value="gene"/>
</dbReference>
<dbReference type="neXtProt" id="NX_Q3SXM5"/>
<dbReference type="OpenTargets" id="ENSG00000103160"/>
<dbReference type="PharmGKB" id="PA134988345"/>
<dbReference type="VEuPathDB" id="HostDB:ENSG00000103160"/>
<dbReference type="eggNOG" id="KOG1014">
    <property type="taxonomic scope" value="Eukaryota"/>
</dbReference>
<dbReference type="GeneTree" id="ENSGT00940000160053"/>
<dbReference type="HOGENOM" id="CLU_010194_38_0_1"/>
<dbReference type="InParanoid" id="Q3SXM5"/>
<dbReference type="OMA" id="QYGLMKC"/>
<dbReference type="OrthoDB" id="5545019at2759"/>
<dbReference type="PAN-GO" id="Q3SXM5">
    <property type="GO annotations" value="1 GO annotation based on evolutionary models"/>
</dbReference>
<dbReference type="PhylomeDB" id="Q3SXM5"/>
<dbReference type="TreeFam" id="TF314591"/>
<dbReference type="PathwayCommons" id="Q3SXM5"/>
<dbReference type="SignaLink" id="Q3SXM5"/>
<dbReference type="BioGRID-ORCS" id="83693">
    <property type="hits" value="12 hits in 1155 CRISPR screens"/>
</dbReference>
<dbReference type="CD-CODE" id="FB4E32DD">
    <property type="entry name" value="Presynaptic clusters and postsynaptic densities"/>
</dbReference>
<dbReference type="ChiTaRS" id="HSDL1">
    <property type="organism name" value="human"/>
</dbReference>
<dbReference type="GenomeRNAi" id="83693"/>
<dbReference type="Pharos" id="Q3SXM5">
    <property type="development level" value="Tbio"/>
</dbReference>
<dbReference type="PRO" id="PR:Q3SXM5"/>
<dbReference type="Proteomes" id="UP000005640">
    <property type="component" value="Chromosome 16"/>
</dbReference>
<dbReference type="RNAct" id="Q3SXM5">
    <property type="molecule type" value="protein"/>
</dbReference>
<dbReference type="Bgee" id="ENSG00000103160">
    <property type="expression patterns" value="Expressed in cortical plate and 173 other cell types or tissues"/>
</dbReference>
<dbReference type="ExpressionAtlas" id="Q3SXM5">
    <property type="expression patterns" value="baseline and differential"/>
</dbReference>
<dbReference type="GO" id="GO:0045111">
    <property type="term" value="C:intermediate filament cytoskeleton"/>
    <property type="evidence" value="ECO:0000314"/>
    <property type="project" value="HPA"/>
</dbReference>
<dbReference type="GO" id="GO:0043231">
    <property type="term" value="C:intracellular membrane-bounded organelle"/>
    <property type="evidence" value="ECO:0000314"/>
    <property type="project" value="HPA"/>
</dbReference>
<dbReference type="GO" id="GO:0005739">
    <property type="term" value="C:mitochondrion"/>
    <property type="evidence" value="ECO:0000314"/>
    <property type="project" value="HPA"/>
</dbReference>
<dbReference type="CDD" id="cd05356">
    <property type="entry name" value="17beta-HSD1_like_SDR_c"/>
    <property type="match status" value="1"/>
</dbReference>
<dbReference type="FunFam" id="3.40.50.720:FF:000137">
    <property type="entry name" value="Hydroxysteroid (17-beta) dehydrogenase 3"/>
    <property type="match status" value="1"/>
</dbReference>
<dbReference type="Gene3D" id="3.40.50.720">
    <property type="entry name" value="NAD(P)-binding Rossmann-like Domain"/>
    <property type="match status" value="1"/>
</dbReference>
<dbReference type="InterPro" id="IPR052149">
    <property type="entry name" value="17-beta-HSD3-like"/>
</dbReference>
<dbReference type="InterPro" id="IPR036291">
    <property type="entry name" value="NAD(P)-bd_dom_sf"/>
</dbReference>
<dbReference type="InterPro" id="IPR002347">
    <property type="entry name" value="SDR_fam"/>
</dbReference>
<dbReference type="PANTHER" id="PTHR44889">
    <property type="entry name" value="INACTIVE HYDROXYSTEROID DEHYDROGENASE-LIKE PROTEIN 1"/>
    <property type="match status" value="1"/>
</dbReference>
<dbReference type="PANTHER" id="PTHR44889:SF1">
    <property type="entry name" value="INACTIVE HYDROXYSTEROID DEHYDROGENASE-LIKE PROTEIN 1"/>
    <property type="match status" value="1"/>
</dbReference>
<dbReference type="Pfam" id="PF00106">
    <property type="entry name" value="adh_short"/>
    <property type="match status" value="1"/>
</dbReference>
<dbReference type="PIRSF" id="PIRSF000126">
    <property type="entry name" value="11-beta-HSD1"/>
    <property type="match status" value="1"/>
</dbReference>
<dbReference type="PRINTS" id="PR00081">
    <property type="entry name" value="GDHRDH"/>
</dbReference>
<dbReference type="PRINTS" id="PR00080">
    <property type="entry name" value="SDRFAMILY"/>
</dbReference>
<dbReference type="SUPFAM" id="SSF51735">
    <property type="entry name" value="NAD(P)-binding Rossmann-fold domains"/>
    <property type="match status" value="1"/>
</dbReference>
<feature type="initiator methionine" description="Removed" evidence="5">
    <location>
        <position position="1"/>
    </location>
</feature>
<feature type="chain" id="PRO_0000313671" description="Inactive hydroxysteroid dehydrogenase-like protein 1">
    <location>
        <begin position="2"/>
        <end position="330"/>
    </location>
</feature>
<feature type="region of interest" description="Required for mitochondria translocation">
    <location>
        <begin position="2"/>
        <end position="82"/>
    </location>
</feature>
<feature type="binding site" evidence="1">
    <location>
        <begin position="74"/>
        <end position="80"/>
    </location>
    <ligand>
        <name>NADP(+)</name>
        <dbReference type="ChEBI" id="CHEBI:58349"/>
    </ligand>
</feature>
<feature type="binding site" evidence="1">
    <location>
        <position position="125"/>
    </location>
    <ligand>
        <name>NADP(+)</name>
        <dbReference type="ChEBI" id="CHEBI:58349"/>
    </ligand>
</feature>
<feature type="binding site" evidence="1">
    <location>
        <position position="222"/>
    </location>
    <ligand>
        <name>NADP(+)</name>
        <dbReference type="ChEBI" id="CHEBI:58349"/>
    </ligand>
</feature>
<feature type="modified residue" description="N-acetylalanine" evidence="5">
    <location>
        <position position="2"/>
    </location>
</feature>
<feature type="splice variant" id="VSP_042823" description="In isoform 2." evidence="6">
    <location>
        <begin position="105"/>
        <end position="159"/>
    </location>
</feature>
<feature type="sequence variant" id="VAR_037693" description="In dbSNP:rs11540436.">
    <original>P</original>
    <variation>S</variation>
    <location>
        <position position="248"/>
    </location>
</feature>
<feature type="sequence variant" id="VAR_037694" description="In dbSNP:rs4378600." evidence="3">
    <original>S</original>
    <variation>C</variation>
    <location>
        <position position="327"/>
    </location>
</feature>
<feature type="mutagenesis site" description="Restores the oxidoreductase activity." evidence="4">
    <original>F</original>
    <variation>Y</variation>
    <location>
        <position position="218"/>
    </location>
</feature>
<feature type="sequence conflict" description="In Ref. 1; AAK15047/AAK16927." evidence="7" ref="1">
    <original>M</original>
    <variation>V</variation>
    <location>
        <position position="1"/>
    </location>
</feature>
<feature type="sequence conflict" description="In Ref. 5; AAI04220/AAI06918." evidence="7" ref="5">
    <original>K</original>
    <variation>R</variation>
    <location>
        <position position="222"/>
    </location>
</feature>
<name>HSDL1_HUMAN</name>
<accession>Q3SXM5</accession>
<accession>B4DSL2</accession>
<accession>D3DUL4</accession>
<accession>Q3SXM4</accession>
<accession>Q8NC98</accession>
<accession>Q9BY22</accession>
<organism>
    <name type="scientific">Homo sapiens</name>
    <name type="common">Human</name>
    <dbReference type="NCBI Taxonomy" id="9606"/>
    <lineage>
        <taxon>Eukaryota</taxon>
        <taxon>Metazoa</taxon>
        <taxon>Chordata</taxon>
        <taxon>Craniata</taxon>
        <taxon>Vertebrata</taxon>
        <taxon>Euteleostomi</taxon>
        <taxon>Mammalia</taxon>
        <taxon>Eutheria</taxon>
        <taxon>Euarchontoglires</taxon>
        <taxon>Primates</taxon>
        <taxon>Haplorrhini</taxon>
        <taxon>Catarrhini</taxon>
        <taxon>Hominidae</taxon>
        <taxon>Homo</taxon>
    </lineage>
</organism>